<accession>Q8PGJ2</accession>
<comment type="function">
    <text evidence="1">Necessary for the introduction of cis unsaturation into fatty acids. Catalyzes the dehydration of (3R)-3-hydroxydecanoyl-ACP to E-(2)-decenoyl-ACP and then its isomerization to Z-(3)-decenoyl-ACP. Can catalyze the dehydratase reaction for beta-hydroxyacyl-ACPs with saturated chain lengths up to 16:0, being most active on intermediate chain length.</text>
</comment>
<comment type="catalytic activity">
    <reaction evidence="1">
        <text>a (3R)-hydroxyacyl-[ACP] = a (2E)-enoyl-[ACP] + H2O</text>
        <dbReference type="Rhea" id="RHEA:13097"/>
        <dbReference type="Rhea" id="RHEA-COMP:9925"/>
        <dbReference type="Rhea" id="RHEA-COMP:9945"/>
        <dbReference type="ChEBI" id="CHEBI:15377"/>
        <dbReference type="ChEBI" id="CHEBI:78784"/>
        <dbReference type="ChEBI" id="CHEBI:78827"/>
        <dbReference type="EC" id="4.2.1.59"/>
    </reaction>
</comment>
<comment type="catalytic activity">
    <reaction evidence="1">
        <text>(3R)-hydroxydecanoyl-[ACP] = (2E)-decenoyl-[ACP] + H2O</text>
        <dbReference type="Rhea" id="RHEA:41860"/>
        <dbReference type="Rhea" id="RHEA-COMP:9638"/>
        <dbReference type="Rhea" id="RHEA-COMP:9639"/>
        <dbReference type="ChEBI" id="CHEBI:15377"/>
        <dbReference type="ChEBI" id="CHEBI:78466"/>
        <dbReference type="ChEBI" id="CHEBI:78467"/>
    </reaction>
</comment>
<comment type="catalytic activity">
    <reaction evidence="1">
        <text>(2E)-decenoyl-[ACP] = (3Z)-decenoyl-[ACP]</text>
        <dbReference type="Rhea" id="RHEA:23568"/>
        <dbReference type="Rhea" id="RHEA-COMP:9639"/>
        <dbReference type="Rhea" id="RHEA-COMP:9927"/>
        <dbReference type="ChEBI" id="CHEBI:78467"/>
        <dbReference type="ChEBI" id="CHEBI:78798"/>
        <dbReference type="EC" id="5.3.3.14"/>
    </reaction>
</comment>
<comment type="pathway">
    <text evidence="1">Lipid metabolism; fatty acid biosynthesis.</text>
</comment>
<comment type="subunit">
    <text evidence="1">Homodimer.</text>
</comment>
<comment type="subcellular location">
    <subcellularLocation>
        <location evidence="1">Cytoplasm</location>
    </subcellularLocation>
</comment>
<comment type="similarity">
    <text evidence="1">Belongs to the thioester dehydratase family. FabA subfamily.</text>
</comment>
<protein>
    <recommendedName>
        <fullName evidence="1">3-hydroxydecanoyl-[acyl-carrier-protein] dehydratase</fullName>
        <ecNumber evidence="1">4.2.1.59</ecNumber>
    </recommendedName>
    <alternativeName>
        <fullName evidence="1">3-hydroxyacyl-[acyl-carrier-protein] dehydratase FabA</fullName>
    </alternativeName>
    <alternativeName>
        <fullName evidence="1">Beta-hydroxydecanoyl thioester dehydrase</fullName>
    </alternativeName>
    <alternativeName>
        <fullName evidence="1">Trans-2-decenoyl-[acyl-carrier-protein] isomerase</fullName>
        <ecNumber evidence="1">5.3.3.14</ecNumber>
    </alternativeName>
</protein>
<keyword id="KW-0963">Cytoplasm</keyword>
<keyword id="KW-0275">Fatty acid biosynthesis</keyword>
<keyword id="KW-0276">Fatty acid metabolism</keyword>
<keyword id="KW-0413">Isomerase</keyword>
<keyword id="KW-0444">Lipid biosynthesis</keyword>
<keyword id="KW-0443">Lipid metabolism</keyword>
<keyword id="KW-0456">Lyase</keyword>
<gene>
    <name evidence="1" type="primary">fabA</name>
    <name type="ordered locus">XAC3623</name>
</gene>
<sequence length="171" mass="19021">MTRQSTYSRDQLLASARGELFAPDSGRLPNDPMLMFDRITEISNTGGAHGKGVIRAELDIRPDLWFFGCHFIGDPVMPGCLGLDAMWQLTGFFLTWIGAPGRGRALGCGEVKFTGQVLPSARLVRYEIDVSRVINRKLVMAQTDARMLVDGREIYTAKDLRVGMFTSTENF</sequence>
<reference key="1">
    <citation type="journal article" date="2002" name="Nature">
        <title>Comparison of the genomes of two Xanthomonas pathogens with differing host specificities.</title>
        <authorList>
            <person name="da Silva A.C.R."/>
            <person name="Ferro J.A."/>
            <person name="Reinach F.C."/>
            <person name="Farah C.S."/>
            <person name="Furlan L.R."/>
            <person name="Quaggio R.B."/>
            <person name="Monteiro-Vitorello C.B."/>
            <person name="Van Sluys M.A."/>
            <person name="Almeida N.F. Jr."/>
            <person name="Alves L.M.C."/>
            <person name="do Amaral A.M."/>
            <person name="Bertolini M.C."/>
            <person name="Camargo L.E.A."/>
            <person name="Camarotte G."/>
            <person name="Cannavan F."/>
            <person name="Cardozo J."/>
            <person name="Chambergo F."/>
            <person name="Ciapina L.P."/>
            <person name="Cicarelli R.M.B."/>
            <person name="Coutinho L.L."/>
            <person name="Cursino-Santos J.R."/>
            <person name="El-Dorry H."/>
            <person name="Faria J.B."/>
            <person name="Ferreira A.J.S."/>
            <person name="Ferreira R.C.C."/>
            <person name="Ferro M.I.T."/>
            <person name="Formighieri E.F."/>
            <person name="Franco M.C."/>
            <person name="Greggio C.C."/>
            <person name="Gruber A."/>
            <person name="Katsuyama A.M."/>
            <person name="Kishi L.T."/>
            <person name="Leite R.P."/>
            <person name="Lemos E.G.M."/>
            <person name="Lemos M.V.F."/>
            <person name="Locali E.C."/>
            <person name="Machado M.A."/>
            <person name="Madeira A.M.B.N."/>
            <person name="Martinez-Rossi N.M."/>
            <person name="Martins E.C."/>
            <person name="Meidanis J."/>
            <person name="Menck C.F.M."/>
            <person name="Miyaki C.Y."/>
            <person name="Moon D.H."/>
            <person name="Moreira L.M."/>
            <person name="Novo M.T.M."/>
            <person name="Okura V.K."/>
            <person name="Oliveira M.C."/>
            <person name="Oliveira V.R."/>
            <person name="Pereira H.A."/>
            <person name="Rossi A."/>
            <person name="Sena J.A.D."/>
            <person name="Silva C."/>
            <person name="de Souza R.F."/>
            <person name="Spinola L.A.F."/>
            <person name="Takita M.A."/>
            <person name="Tamura R.E."/>
            <person name="Teixeira E.C."/>
            <person name="Tezza R.I.D."/>
            <person name="Trindade dos Santos M."/>
            <person name="Truffi D."/>
            <person name="Tsai S.M."/>
            <person name="White F.F."/>
            <person name="Setubal J.C."/>
            <person name="Kitajima J.P."/>
        </authorList>
    </citation>
    <scope>NUCLEOTIDE SEQUENCE [LARGE SCALE GENOMIC DNA]</scope>
    <source>
        <strain>306</strain>
    </source>
</reference>
<feature type="chain" id="PRO_0000091622" description="3-hydroxydecanoyl-[acyl-carrier-protein] dehydratase">
    <location>
        <begin position="1"/>
        <end position="171"/>
    </location>
</feature>
<feature type="active site" evidence="1">
    <location>
        <position position="70"/>
    </location>
</feature>
<evidence type="ECO:0000255" key="1">
    <source>
        <dbReference type="HAMAP-Rule" id="MF_00405"/>
    </source>
</evidence>
<name>FABA_XANAC</name>
<dbReference type="EC" id="4.2.1.59" evidence="1"/>
<dbReference type="EC" id="5.3.3.14" evidence="1"/>
<dbReference type="EMBL" id="AE008923">
    <property type="protein sequence ID" value="AAM38467.1"/>
    <property type="molecule type" value="Genomic_DNA"/>
</dbReference>
<dbReference type="RefSeq" id="WP_011052406.1">
    <property type="nucleotide sequence ID" value="NC_003919.1"/>
</dbReference>
<dbReference type="SMR" id="Q8PGJ2"/>
<dbReference type="GeneID" id="66912657"/>
<dbReference type="KEGG" id="xac:XAC3623"/>
<dbReference type="eggNOG" id="COG0764">
    <property type="taxonomic scope" value="Bacteria"/>
</dbReference>
<dbReference type="HOGENOM" id="CLU_097925_0_0_6"/>
<dbReference type="UniPathway" id="UPA00094"/>
<dbReference type="Proteomes" id="UP000000576">
    <property type="component" value="Chromosome"/>
</dbReference>
<dbReference type="GO" id="GO:0005737">
    <property type="term" value="C:cytoplasm"/>
    <property type="evidence" value="ECO:0007669"/>
    <property type="project" value="UniProtKB-SubCell"/>
</dbReference>
<dbReference type="GO" id="GO:0019171">
    <property type="term" value="F:(3R)-hydroxyacyl-[acyl-carrier-protein] dehydratase activity"/>
    <property type="evidence" value="ECO:0007669"/>
    <property type="project" value="UniProtKB-UniRule"/>
</dbReference>
<dbReference type="GO" id="GO:0034017">
    <property type="term" value="F:trans-2-decenoyl-acyl-carrier-protein isomerase activity"/>
    <property type="evidence" value="ECO:0007669"/>
    <property type="project" value="UniProtKB-UniRule"/>
</dbReference>
<dbReference type="GO" id="GO:0006636">
    <property type="term" value="P:unsaturated fatty acid biosynthetic process"/>
    <property type="evidence" value="ECO:0007669"/>
    <property type="project" value="UniProtKB-UniRule"/>
</dbReference>
<dbReference type="CDD" id="cd01287">
    <property type="entry name" value="FabA"/>
    <property type="match status" value="1"/>
</dbReference>
<dbReference type="Gene3D" id="3.10.129.10">
    <property type="entry name" value="Hotdog Thioesterase"/>
    <property type="match status" value="1"/>
</dbReference>
<dbReference type="HAMAP" id="MF_00405">
    <property type="entry name" value="FabA"/>
    <property type="match status" value="1"/>
</dbReference>
<dbReference type="InterPro" id="IPR010083">
    <property type="entry name" value="FabA"/>
</dbReference>
<dbReference type="InterPro" id="IPR013114">
    <property type="entry name" value="FabA_FabZ"/>
</dbReference>
<dbReference type="InterPro" id="IPR029069">
    <property type="entry name" value="HotDog_dom_sf"/>
</dbReference>
<dbReference type="NCBIfam" id="TIGR01749">
    <property type="entry name" value="fabA"/>
    <property type="match status" value="1"/>
</dbReference>
<dbReference type="NCBIfam" id="NF003509">
    <property type="entry name" value="PRK05174.1"/>
    <property type="match status" value="1"/>
</dbReference>
<dbReference type="PANTHER" id="PTHR30272">
    <property type="entry name" value="3-HYDROXYACYL-[ACYL-CARRIER-PROTEIN] DEHYDRATASE"/>
    <property type="match status" value="1"/>
</dbReference>
<dbReference type="PANTHER" id="PTHR30272:SF8">
    <property type="entry name" value="3-HYDROXYDECANOYL-[ACYL-CARRIER-PROTEIN] DEHYDRATASE"/>
    <property type="match status" value="1"/>
</dbReference>
<dbReference type="Pfam" id="PF07977">
    <property type="entry name" value="FabA"/>
    <property type="match status" value="1"/>
</dbReference>
<dbReference type="SUPFAM" id="SSF54637">
    <property type="entry name" value="Thioesterase/thiol ester dehydrase-isomerase"/>
    <property type="match status" value="1"/>
</dbReference>
<organism>
    <name type="scientific">Xanthomonas axonopodis pv. citri (strain 306)</name>
    <dbReference type="NCBI Taxonomy" id="190486"/>
    <lineage>
        <taxon>Bacteria</taxon>
        <taxon>Pseudomonadati</taxon>
        <taxon>Pseudomonadota</taxon>
        <taxon>Gammaproteobacteria</taxon>
        <taxon>Lysobacterales</taxon>
        <taxon>Lysobacteraceae</taxon>
        <taxon>Xanthomonas</taxon>
    </lineage>
</organism>
<proteinExistence type="inferred from homology"/>